<reference key="1">
    <citation type="journal article" date="2010" name="Genome Biol. Evol.">
        <title>Continuing evolution of Burkholderia mallei through genome reduction and large-scale rearrangements.</title>
        <authorList>
            <person name="Losada L."/>
            <person name="Ronning C.M."/>
            <person name="DeShazer D."/>
            <person name="Woods D."/>
            <person name="Fedorova N."/>
            <person name="Kim H.S."/>
            <person name="Shabalina S.A."/>
            <person name="Pearson T.R."/>
            <person name="Brinkac L."/>
            <person name="Tan P."/>
            <person name="Nandi T."/>
            <person name="Crabtree J."/>
            <person name="Badger J."/>
            <person name="Beckstrom-Sternberg S."/>
            <person name="Saqib M."/>
            <person name="Schutzer S.E."/>
            <person name="Keim P."/>
            <person name="Nierman W.C."/>
        </authorList>
    </citation>
    <scope>NUCLEOTIDE SEQUENCE [LARGE SCALE GENOMIC DNA]</scope>
    <source>
        <strain>1710b</strain>
    </source>
</reference>
<dbReference type="EC" id="3.4.11.1" evidence="1"/>
<dbReference type="EC" id="3.4.11.10" evidence="1"/>
<dbReference type="EMBL" id="CP000124">
    <property type="protein sequence ID" value="ABA48129.1"/>
    <property type="molecule type" value="Genomic_DNA"/>
</dbReference>
<dbReference type="RefSeq" id="WP_004526301.1">
    <property type="nucleotide sequence ID" value="NC_007434.1"/>
</dbReference>
<dbReference type="SMR" id="Q3JV16"/>
<dbReference type="MEROPS" id="M17.003"/>
<dbReference type="EnsemblBacteria" id="ABA48129">
    <property type="protein sequence ID" value="ABA48129"/>
    <property type="gene ID" value="BURPS1710b_1176"/>
</dbReference>
<dbReference type="KEGG" id="bpm:BURPS1710b_1176"/>
<dbReference type="HOGENOM" id="CLU_013734_2_2_4"/>
<dbReference type="Proteomes" id="UP000002700">
    <property type="component" value="Chromosome I"/>
</dbReference>
<dbReference type="GO" id="GO:0005737">
    <property type="term" value="C:cytoplasm"/>
    <property type="evidence" value="ECO:0007669"/>
    <property type="project" value="UniProtKB-SubCell"/>
</dbReference>
<dbReference type="GO" id="GO:0030145">
    <property type="term" value="F:manganese ion binding"/>
    <property type="evidence" value="ECO:0007669"/>
    <property type="project" value="UniProtKB-UniRule"/>
</dbReference>
<dbReference type="GO" id="GO:0070006">
    <property type="term" value="F:metalloaminopeptidase activity"/>
    <property type="evidence" value="ECO:0007669"/>
    <property type="project" value="InterPro"/>
</dbReference>
<dbReference type="GO" id="GO:0006508">
    <property type="term" value="P:proteolysis"/>
    <property type="evidence" value="ECO:0007669"/>
    <property type="project" value="UniProtKB-KW"/>
</dbReference>
<dbReference type="CDD" id="cd00433">
    <property type="entry name" value="Peptidase_M17"/>
    <property type="match status" value="1"/>
</dbReference>
<dbReference type="FunFam" id="3.40.630.10:FF:000004">
    <property type="entry name" value="Probable cytosol aminopeptidase"/>
    <property type="match status" value="1"/>
</dbReference>
<dbReference type="Gene3D" id="3.40.220.10">
    <property type="entry name" value="Leucine Aminopeptidase, subunit E, domain 1"/>
    <property type="match status" value="1"/>
</dbReference>
<dbReference type="Gene3D" id="3.40.630.10">
    <property type="entry name" value="Zn peptidases"/>
    <property type="match status" value="1"/>
</dbReference>
<dbReference type="HAMAP" id="MF_00181">
    <property type="entry name" value="Cytosol_peptidase_M17"/>
    <property type="match status" value="1"/>
</dbReference>
<dbReference type="InterPro" id="IPR011356">
    <property type="entry name" value="Leucine_aapep/pepB"/>
</dbReference>
<dbReference type="InterPro" id="IPR043472">
    <property type="entry name" value="Macro_dom-like"/>
</dbReference>
<dbReference type="InterPro" id="IPR000819">
    <property type="entry name" value="Peptidase_M17_C"/>
</dbReference>
<dbReference type="InterPro" id="IPR023042">
    <property type="entry name" value="Peptidase_M17_leu_NH2_pept"/>
</dbReference>
<dbReference type="InterPro" id="IPR008283">
    <property type="entry name" value="Peptidase_M17_N"/>
</dbReference>
<dbReference type="NCBIfam" id="NF002073">
    <property type="entry name" value="PRK00913.1-2"/>
    <property type="match status" value="1"/>
</dbReference>
<dbReference type="NCBIfam" id="NF002074">
    <property type="entry name" value="PRK00913.1-4"/>
    <property type="match status" value="1"/>
</dbReference>
<dbReference type="NCBIfam" id="NF002077">
    <property type="entry name" value="PRK00913.2-4"/>
    <property type="match status" value="1"/>
</dbReference>
<dbReference type="NCBIfam" id="NF002083">
    <property type="entry name" value="PRK00913.3-5"/>
    <property type="match status" value="1"/>
</dbReference>
<dbReference type="PANTHER" id="PTHR11963:SF23">
    <property type="entry name" value="CYTOSOL AMINOPEPTIDASE"/>
    <property type="match status" value="1"/>
</dbReference>
<dbReference type="PANTHER" id="PTHR11963">
    <property type="entry name" value="LEUCINE AMINOPEPTIDASE-RELATED"/>
    <property type="match status" value="1"/>
</dbReference>
<dbReference type="Pfam" id="PF00883">
    <property type="entry name" value="Peptidase_M17"/>
    <property type="match status" value="1"/>
</dbReference>
<dbReference type="Pfam" id="PF02789">
    <property type="entry name" value="Peptidase_M17_N"/>
    <property type="match status" value="1"/>
</dbReference>
<dbReference type="PRINTS" id="PR00481">
    <property type="entry name" value="LAMNOPPTDASE"/>
</dbReference>
<dbReference type="SUPFAM" id="SSF52949">
    <property type="entry name" value="Macro domain-like"/>
    <property type="match status" value="1"/>
</dbReference>
<dbReference type="SUPFAM" id="SSF53187">
    <property type="entry name" value="Zn-dependent exopeptidases"/>
    <property type="match status" value="1"/>
</dbReference>
<dbReference type="PROSITE" id="PS00631">
    <property type="entry name" value="CYTOSOL_AP"/>
    <property type="match status" value="1"/>
</dbReference>
<comment type="function">
    <text evidence="1">Presumably involved in the processing and regular turnover of intracellular proteins. Catalyzes the removal of unsubstituted N-terminal amino acids from various peptides.</text>
</comment>
<comment type="catalytic activity">
    <reaction evidence="1">
        <text>Release of an N-terminal amino acid, Xaa-|-Yaa-, in which Xaa is preferably Leu, but may be other amino acids including Pro although not Arg or Lys, and Yaa may be Pro. Amino acid amides and methyl esters are also readily hydrolyzed, but rates on arylamides are exceedingly low.</text>
        <dbReference type="EC" id="3.4.11.1"/>
    </reaction>
</comment>
<comment type="catalytic activity">
    <reaction evidence="1">
        <text>Release of an N-terminal amino acid, preferentially leucine, but not glutamic or aspartic acids.</text>
        <dbReference type="EC" id="3.4.11.10"/>
    </reaction>
</comment>
<comment type="cofactor">
    <cofactor evidence="1">
        <name>Mn(2+)</name>
        <dbReference type="ChEBI" id="CHEBI:29035"/>
    </cofactor>
    <text evidence="1">Binds 2 manganese ions per subunit.</text>
</comment>
<comment type="subcellular location">
    <subcellularLocation>
        <location evidence="1">Cytoplasm</location>
    </subcellularLocation>
</comment>
<comment type="similarity">
    <text evidence="1">Belongs to the peptidase M17 family.</text>
</comment>
<proteinExistence type="inferred from homology"/>
<feature type="chain" id="PRO_1000019897" description="Probable cytosol aminopeptidase">
    <location>
        <begin position="1"/>
        <end position="503"/>
    </location>
</feature>
<feature type="active site" evidence="1">
    <location>
        <position position="286"/>
    </location>
</feature>
<feature type="active site" evidence="1">
    <location>
        <position position="360"/>
    </location>
</feature>
<feature type="binding site" evidence="1">
    <location>
        <position position="274"/>
    </location>
    <ligand>
        <name>Mn(2+)</name>
        <dbReference type="ChEBI" id="CHEBI:29035"/>
        <label>2</label>
    </ligand>
</feature>
<feature type="binding site" evidence="1">
    <location>
        <position position="279"/>
    </location>
    <ligand>
        <name>Mn(2+)</name>
        <dbReference type="ChEBI" id="CHEBI:29035"/>
        <label>1</label>
    </ligand>
</feature>
<feature type="binding site" evidence="1">
    <location>
        <position position="279"/>
    </location>
    <ligand>
        <name>Mn(2+)</name>
        <dbReference type="ChEBI" id="CHEBI:29035"/>
        <label>2</label>
    </ligand>
</feature>
<feature type="binding site" evidence="1">
    <location>
        <position position="297"/>
    </location>
    <ligand>
        <name>Mn(2+)</name>
        <dbReference type="ChEBI" id="CHEBI:29035"/>
        <label>2</label>
    </ligand>
</feature>
<feature type="binding site" evidence="1">
    <location>
        <position position="356"/>
    </location>
    <ligand>
        <name>Mn(2+)</name>
        <dbReference type="ChEBI" id="CHEBI:29035"/>
        <label>1</label>
    </ligand>
</feature>
<feature type="binding site" evidence="1">
    <location>
        <position position="358"/>
    </location>
    <ligand>
        <name>Mn(2+)</name>
        <dbReference type="ChEBI" id="CHEBI:29035"/>
        <label>1</label>
    </ligand>
</feature>
<feature type="binding site" evidence="1">
    <location>
        <position position="358"/>
    </location>
    <ligand>
        <name>Mn(2+)</name>
        <dbReference type="ChEBI" id="CHEBI:29035"/>
        <label>2</label>
    </ligand>
</feature>
<gene>
    <name evidence="1" type="primary">pepA</name>
    <name type="ordered locus">BURPS1710b_1176</name>
</gene>
<evidence type="ECO:0000255" key="1">
    <source>
        <dbReference type="HAMAP-Rule" id="MF_00181"/>
    </source>
</evidence>
<protein>
    <recommendedName>
        <fullName evidence="1">Probable cytosol aminopeptidase</fullName>
        <ecNumber evidence="1">3.4.11.1</ecNumber>
    </recommendedName>
    <alternativeName>
        <fullName evidence="1">Leucine aminopeptidase</fullName>
        <shortName evidence="1">LAP</shortName>
        <ecNumber evidence="1">3.4.11.10</ecNumber>
    </alternativeName>
    <alternativeName>
        <fullName evidence="1">Leucyl aminopeptidase</fullName>
    </alternativeName>
</protein>
<name>AMPA_BURP1</name>
<keyword id="KW-0031">Aminopeptidase</keyword>
<keyword id="KW-0963">Cytoplasm</keyword>
<keyword id="KW-0378">Hydrolase</keyword>
<keyword id="KW-0464">Manganese</keyword>
<keyword id="KW-0479">Metal-binding</keyword>
<keyword id="KW-0645">Protease</keyword>
<organism>
    <name type="scientific">Burkholderia pseudomallei (strain 1710b)</name>
    <dbReference type="NCBI Taxonomy" id="320372"/>
    <lineage>
        <taxon>Bacteria</taxon>
        <taxon>Pseudomonadati</taxon>
        <taxon>Pseudomonadota</taxon>
        <taxon>Betaproteobacteria</taxon>
        <taxon>Burkholderiales</taxon>
        <taxon>Burkholderiaceae</taxon>
        <taxon>Burkholderia</taxon>
        <taxon>pseudomallei group</taxon>
    </lineage>
</organism>
<accession>Q3JV16</accession>
<sequence>MDFSIKGCDWSKGTANGFLTGKSDCIVLGVFEAQTLSGAALDIDEATKGLVSRVIKAGDIDGKLGKTLFLHEVSGIGASRVLLVGLGRQDAFSQKAYGDAAKAAWRALLGTKVVQVTFTLAQLPVPERASDWGVRAAILALRNETYKFTQMKSKPDAGAPALKRVVFSVDPADDKAAKVAAKQAVALANGMDLTRDLGNLPGNVCTPTYLANTAKKIAKDWGLKVDVLGLKQIQALKMGSFLSVAKGSVEPPQFIVLQYRGAAAKAAPVVLVGKGITFDSGGISLKPGEGMDEMKYDMCGAGSVLGTMRAVAEMGLKINVVAIVPTCENMPAGNANKPGDIVTSMKGLTIEVLNTDAEGRLILCDALTYAERFKPAAVIDVATLTGACIIALGHHNTGLFSKDDALAGELLDASREAGDPAWRLPLDDEYQDQLKSNFADLANIGGRPAGSVTAACFLSRFAENYPWAHLDIAGTAWKSGAAKGATGRPVPLLAQFLIDRAGA</sequence>